<keyword id="KW-0249">Electron transport</keyword>
<keyword id="KW-0349">Heme</keyword>
<keyword id="KW-0408">Iron</keyword>
<keyword id="KW-0472">Membrane</keyword>
<keyword id="KW-0479">Metal-binding</keyword>
<keyword id="KW-0496">Mitochondrion</keyword>
<keyword id="KW-0999">Mitochondrion inner membrane</keyword>
<keyword id="KW-0679">Respiratory chain</keyword>
<keyword id="KW-0812">Transmembrane</keyword>
<keyword id="KW-1133">Transmembrane helix</keyword>
<keyword id="KW-0813">Transport</keyword>
<keyword id="KW-0830">Ubiquinone</keyword>
<feature type="chain" id="PRO_0000255130" description="Cytochrome b">
    <location>
        <begin position="1"/>
        <end position="379"/>
    </location>
</feature>
<feature type="transmembrane region" description="Helical" evidence="2">
    <location>
        <begin position="33"/>
        <end position="53"/>
    </location>
</feature>
<feature type="transmembrane region" description="Helical" evidence="2">
    <location>
        <begin position="77"/>
        <end position="98"/>
    </location>
</feature>
<feature type="transmembrane region" description="Helical" evidence="2">
    <location>
        <begin position="113"/>
        <end position="133"/>
    </location>
</feature>
<feature type="transmembrane region" description="Helical" evidence="2">
    <location>
        <begin position="178"/>
        <end position="198"/>
    </location>
</feature>
<feature type="transmembrane region" description="Helical" evidence="2">
    <location>
        <begin position="226"/>
        <end position="246"/>
    </location>
</feature>
<feature type="transmembrane region" description="Helical" evidence="2">
    <location>
        <begin position="288"/>
        <end position="308"/>
    </location>
</feature>
<feature type="transmembrane region" description="Helical" evidence="2">
    <location>
        <begin position="320"/>
        <end position="340"/>
    </location>
</feature>
<feature type="transmembrane region" description="Helical" evidence="2">
    <location>
        <begin position="347"/>
        <end position="367"/>
    </location>
</feature>
<feature type="binding site" description="axial binding residue" evidence="2">
    <location>
        <position position="83"/>
    </location>
    <ligand>
        <name>heme b</name>
        <dbReference type="ChEBI" id="CHEBI:60344"/>
        <label>b562</label>
    </ligand>
    <ligandPart>
        <name>Fe</name>
        <dbReference type="ChEBI" id="CHEBI:18248"/>
    </ligandPart>
</feature>
<feature type="binding site" description="axial binding residue" evidence="2">
    <location>
        <position position="97"/>
    </location>
    <ligand>
        <name>heme b</name>
        <dbReference type="ChEBI" id="CHEBI:60344"/>
        <label>b566</label>
    </ligand>
    <ligandPart>
        <name>Fe</name>
        <dbReference type="ChEBI" id="CHEBI:18248"/>
    </ligandPart>
</feature>
<feature type="binding site" description="axial binding residue" evidence="2">
    <location>
        <position position="182"/>
    </location>
    <ligand>
        <name>heme b</name>
        <dbReference type="ChEBI" id="CHEBI:60344"/>
        <label>b562</label>
    </ligand>
    <ligandPart>
        <name>Fe</name>
        <dbReference type="ChEBI" id="CHEBI:18248"/>
    </ligandPart>
</feature>
<feature type="binding site" description="axial binding residue" evidence="2">
    <location>
        <position position="196"/>
    </location>
    <ligand>
        <name>heme b</name>
        <dbReference type="ChEBI" id="CHEBI:60344"/>
        <label>b566</label>
    </ligand>
    <ligandPart>
        <name>Fe</name>
        <dbReference type="ChEBI" id="CHEBI:18248"/>
    </ligandPart>
</feature>
<feature type="binding site" evidence="2">
    <location>
        <position position="201"/>
    </location>
    <ligand>
        <name>a ubiquinone</name>
        <dbReference type="ChEBI" id="CHEBI:16389"/>
    </ligand>
</feature>
<reference key="1">
    <citation type="journal article" date="2002" name="Mol. Phylogenet. Evol.">
        <title>Molecular systematics of sciurognathi (rodentia): the mitochondrial cytochrome b and 12S rRNA genes support the Anomaluroidea (Pedetidae and Anomaluridae).</title>
        <authorList>
            <person name="Montgelard C."/>
            <person name="Bentz S."/>
            <person name="Tirard C."/>
            <person name="Verneau O."/>
            <person name="Catzeflis F.M."/>
        </authorList>
    </citation>
    <scope>NUCLEOTIDE SEQUENCE [GENOMIC DNA]</scope>
</reference>
<dbReference type="EMBL" id="AJ389530">
    <property type="protein sequence ID" value="CAC80525.1"/>
    <property type="molecule type" value="Genomic_DNA"/>
</dbReference>
<dbReference type="SMR" id="Q8W9E4"/>
<dbReference type="GO" id="GO:0005743">
    <property type="term" value="C:mitochondrial inner membrane"/>
    <property type="evidence" value="ECO:0007669"/>
    <property type="project" value="UniProtKB-SubCell"/>
</dbReference>
<dbReference type="GO" id="GO:0045275">
    <property type="term" value="C:respiratory chain complex III"/>
    <property type="evidence" value="ECO:0007669"/>
    <property type="project" value="InterPro"/>
</dbReference>
<dbReference type="GO" id="GO:0046872">
    <property type="term" value="F:metal ion binding"/>
    <property type="evidence" value="ECO:0007669"/>
    <property type="project" value="UniProtKB-KW"/>
</dbReference>
<dbReference type="GO" id="GO:0008121">
    <property type="term" value="F:ubiquinol-cytochrome-c reductase activity"/>
    <property type="evidence" value="ECO:0007669"/>
    <property type="project" value="InterPro"/>
</dbReference>
<dbReference type="GO" id="GO:0006122">
    <property type="term" value="P:mitochondrial electron transport, ubiquinol to cytochrome c"/>
    <property type="evidence" value="ECO:0007669"/>
    <property type="project" value="TreeGrafter"/>
</dbReference>
<dbReference type="CDD" id="cd00290">
    <property type="entry name" value="cytochrome_b_C"/>
    <property type="match status" value="1"/>
</dbReference>
<dbReference type="CDD" id="cd00284">
    <property type="entry name" value="Cytochrome_b_N"/>
    <property type="match status" value="1"/>
</dbReference>
<dbReference type="FunFam" id="1.20.810.10:FF:000002">
    <property type="entry name" value="Cytochrome b"/>
    <property type="match status" value="1"/>
</dbReference>
<dbReference type="Gene3D" id="1.20.810.10">
    <property type="entry name" value="Cytochrome Bc1 Complex, Chain C"/>
    <property type="match status" value="1"/>
</dbReference>
<dbReference type="InterPro" id="IPR005798">
    <property type="entry name" value="Cyt_b/b6_C"/>
</dbReference>
<dbReference type="InterPro" id="IPR036150">
    <property type="entry name" value="Cyt_b/b6_C_sf"/>
</dbReference>
<dbReference type="InterPro" id="IPR005797">
    <property type="entry name" value="Cyt_b/b6_N"/>
</dbReference>
<dbReference type="InterPro" id="IPR027387">
    <property type="entry name" value="Cytb/b6-like_sf"/>
</dbReference>
<dbReference type="InterPro" id="IPR030689">
    <property type="entry name" value="Cytochrome_b"/>
</dbReference>
<dbReference type="InterPro" id="IPR048260">
    <property type="entry name" value="Cytochrome_b_C_euk/bac"/>
</dbReference>
<dbReference type="InterPro" id="IPR048259">
    <property type="entry name" value="Cytochrome_b_N_euk/bac"/>
</dbReference>
<dbReference type="InterPro" id="IPR016174">
    <property type="entry name" value="Di-haem_cyt_TM"/>
</dbReference>
<dbReference type="PANTHER" id="PTHR19271">
    <property type="entry name" value="CYTOCHROME B"/>
    <property type="match status" value="1"/>
</dbReference>
<dbReference type="PANTHER" id="PTHR19271:SF16">
    <property type="entry name" value="CYTOCHROME B"/>
    <property type="match status" value="1"/>
</dbReference>
<dbReference type="Pfam" id="PF00032">
    <property type="entry name" value="Cytochrom_B_C"/>
    <property type="match status" value="1"/>
</dbReference>
<dbReference type="Pfam" id="PF00033">
    <property type="entry name" value="Cytochrome_B"/>
    <property type="match status" value="1"/>
</dbReference>
<dbReference type="PIRSF" id="PIRSF038885">
    <property type="entry name" value="COB"/>
    <property type="match status" value="1"/>
</dbReference>
<dbReference type="SUPFAM" id="SSF81648">
    <property type="entry name" value="a domain/subunit of cytochrome bc1 complex (Ubiquinol-cytochrome c reductase)"/>
    <property type="match status" value="1"/>
</dbReference>
<dbReference type="SUPFAM" id="SSF81342">
    <property type="entry name" value="Transmembrane di-heme cytochromes"/>
    <property type="match status" value="1"/>
</dbReference>
<dbReference type="PROSITE" id="PS51003">
    <property type="entry name" value="CYTB_CTER"/>
    <property type="match status" value="1"/>
</dbReference>
<dbReference type="PROSITE" id="PS51002">
    <property type="entry name" value="CYTB_NTER"/>
    <property type="match status" value="1"/>
</dbReference>
<protein>
    <recommendedName>
        <fullName>Cytochrome b</fullName>
    </recommendedName>
    <alternativeName>
        <fullName>Complex III subunit 3</fullName>
    </alternativeName>
    <alternativeName>
        <fullName>Complex III subunit III</fullName>
    </alternativeName>
    <alternativeName>
        <fullName>Cytochrome b-c1 complex subunit 3</fullName>
    </alternativeName>
    <alternativeName>
        <fullName>Ubiquinol-cytochrome-c reductase complex cytochrome b subunit</fullName>
    </alternativeName>
</protein>
<geneLocation type="mitochondrion"/>
<evidence type="ECO:0000250" key="1"/>
<evidence type="ECO:0000250" key="2">
    <source>
        <dbReference type="UniProtKB" id="P00157"/>
    </source>
</evidence>
<evidence type="ECO:0000255" key="3">
    <source>
        <dbReference type="PROSITE-ProRule" id="PRU00967"/>
    </source>
</evidence>
<evidence type="ECO:0000255" key="4">
    <source>
        <dbReference type="PROSITE-ProRule" id="PRU00968"/>
    </source>
</evidence>
<proteinExistence type="inferred from homology"/>
<comment type="function">
    <text evidence="2">Component of the ubiquinol-cytochrome c reductase complex (complex III or cytochrome b-c1 complex) that is part of the mitochondrial respiratory chain. The b-c1 complex mediates electron transfer from ubiquinol to cytochrome c. Contributes to the generation of a proton gradient across the mitochondrial membrane that is then used for ATP synthesis.</text>
</comment>
<comment type="cofactor">
    <cofactor evidence="2">
        <name>heme b</name>
        <dbReference type="ChEBI" id="CHEBI:60344"/>
    </cofactor>
    <text evidence="2">Binds 2 heme b groups non-covalently.</text>
</comment>
<comment type="subunit">
    <text evidence="2">The cytochrome bc1 complex contains 11 subunits: 3 respiratory subunits (MT-CYB, CYC1 and UQCRFS1), 2 core proteins (UQCRC1 and UQCRC2) and 6 low-molecular weight proteins (UQCRH/QCR6, UQCRB/QCR7, UQCRQ/QCR8, UQCR10/QCR9, UQCR11/QCR10 and a cleavage product of UQCRFS1). This cytochrome bc1 complex then forms a dimer.</text>
</comment>
<comment type="subcellular location">
    <subcellularLocation>
        <location evidence="2">Mitochondrion inner membrane</location>
        <topology evidence="2">Multi-pass membrane protein</topology>
    </subcellularLocation>
</comment>
<comment type="miscellaneous">
    <text evidence="1">Heme 1 (or BL or b562) is low-potential and absorbs at about 562 nm, and heme 2 (or BH or b566) is high-potential and absorbs at about 566 nm.</text>
</comment>
<comment type="similarity">
    <text evidence="3 4">Belongs to the cytochrome b family.</text>
</comment>
<comment type="caution">
    <text evidence="2">The full-length protein contains only eight transmembrane helices, not nine as predicted by bioinformatics tools.</text>
</comment>
<accession>Q8W9E4</accession>
<gene>
    <name type="primary">MT-CYB</name>
    <name type="synonym">COB</name>
    <name type="synonym">CYTB</name>
    <name type="synonym">MTCYB</name>
</gene>
<name>CYB_SCIAE</name>
<organism>
    <name type="scientific">Sciurus aestuans</name>
    <name type="common">Guianan squirrel</name>
    <name type="synonym">Guerlinguetus aestuans</name>
    <dbReference type="NCBI Taxonomy" id="84648"/>
    <lineage>
        <taxon>Eukaryota</taxon>
        <taxon>Metazoa</taxon>
        <taxon>Chordata</taxon>
        <taxon>Craniata</taxon>
        <taxon>Vertebrata</taxon>
        <taxon>Euteleostomi</taxon>
        <taxon>Mammalia</taxon>
        <taxon>Eutheria</taxon>
        <taxon>Euarchontoglires</taxon>
        <taxon>Glires</taxon>
        <taxon>Rodentia</taxon>
        <taxon>Sciuromorpha</taxon>
        <taxon>Sciuridae</taxon>
        <taxon>Sciurinae</taxon>
        <taxon>Sciurini</taxon>
        <taxon>Guerlinguetus</taxon>
    </lineage>
</organism>
<sequence>MTNIRKTHPLLKIVNHSFIDLPAPSNISAWWNFGSLLGLCLLIQILTGLFLAMHYTSDTTTAFSSVTHICRDVNYGWLIRYMHANGACLFFICLFLHVGRGLYYGSYTYFETWNIGVILLFAVMATAFMGYVLPWGQMSFWGATVITNLLSAIPYIGTTLVEWIWGGFSVDKATLTRFSPFHFILPFIIAALVMVHLLFLHETGSNNPSGLISDSDKIPFHPYYTIKDVLGVLLLLLLFMTLVLFTPDLLGDPDNYAPANPLNTPPHIKPEWYFLFAYAILRSIPNKLGGVLALVFSILILMLFPILHVSKQRSMMFRPLSQCLFWILAADLFTLTWIGGQPVEHPFITIGQVASILYFMIILFALPSISMLENKLLKW</sequence>